<name>Y1283_BURCH</name>
<keyword id="KW-0997">Cell inner membrane</keyword>
<keyword id="KW-1003">Cell membrane</keyword>
<keyword id="KW-0472">Membrane</keyword>
<keyword id="KW-0812">Transmembrane</keyword>
<keyword id="KW-1133">Transmembrane helix</keyword>
<organism>
    <name type="scientific">Burkholderia cenocepacia (strain HI2424)</name>
    <dbReference type="NCBI Taxonomy" id="331272"/>
    <lineage>
        <taxon>Bacteria</taxon>
        <taxon>Pseudomonadati</taxon>
        <taxon>Pseudomonadota</taxon>
        <taxon>Betaproteobacteria</taxon>
        <taxon>Burkholderiales</taxon>
        <taxon>Burkholderiaceae</taxon>
        <taxon>Burkholderia</taxon>
        <taxon>Burkholderia cepacia complex</taxon>
    </lineage>
</organism>
<reference key="1">
    <citation type="submission" date="2006-08" db="EMBL/GenBank/DDBJ databases">
        <title>Complete sequence of chromosome 1 of Burkholderia cenocepacia HI2424.</title>
        <authorList>
            <person name="Copeland A."/>
            <person name="Lucas S."/>
            <person name="Lapidus A."/>
            <person name="Barry K."/>
            <person name="Detter J.C."/>
            <person name="Glavina del Rio T."/>
            <person name="Hammon N."/>
            <person name="Israni S."/>
            <person name="Pitluck S."/>
            <person name="Chain P."/>
            <person name="Malfatti S."/>
            <person name="Shin M."/>
            <person name="Vergez L."/>
            <person name="Schmutz J."/>
            <person name="Larimer F."/>
            <person name="Land M."/>
            <person name="Hauser L."/>
            <person name="Kyrpides N."/>
            <person name="Kim E."/>
            <person name="LiPuma J.J."/>
            <person name="Gonzalez C.F."/>
            <person name="Konstantinidis K."/>
            <person name="Tiedje J.M."/>
            <person name="Richardson P."/>
        </authorList>
    </citation>
    <scope>NUCLEOTIDE SEQUENCE [LARGE SCALE GENOMIC DNA]</scope>
    <source>
        <strain>HI2424</strain>
    </source>
</reference>
<gene>
    <name type="ordered locus">Bcen2424_1283</name>
</gene>
<dbReference type="EMBL" id="CP000458">
    <property type="protein sequence ID" value="ABK08035.1"/>
    <property type="status" value="ALT_INIT"/>
    <property type="molecule type" value="Genomic_DNA"/>
</dbReference>
<dbReference type="RefSeq" id="WP_011545077.1">
    <property type="nucleotide sequence ID" value="NC_008542.1"/>
</dbReference>
<dbReference type="SMR" id="A0K6A8"/>
<dbReference type="KEGG" id="bch:Bcen2424_1283"/>
<dbReference type="HOGENOM" id="CLU_117653_2_0_4"/>
<dbReference type="GO" id="GO:0005886">
    <property type="term" value="C:plasma membrane"/>
    <property type="evidence" value="ECO:0007669"/>
    <property type="project" value="UniProtKB-SubCell"/>
</dbReference>
<dbReference type="HAMAP" id="MF_00010">
    <property type="entry name" value="UPF0060"/>
    <property type="match status" value="1"/>
</dbReference>
<dbReference type="InterPro" id="IPR003844">
    <property type="entry name" value="UPF0060"/>
</dbReference>
<dbReference type="NCBIfam" id="NF002586">
    <property type="entry name" value="PRK02237.1"/>
    <property type="match status" value="1"/>
</dbReference>
<dbReference type="PANTHER" id="PTHR36116">
    <property type="entry name" value="UPF0060 MEMBRANE PROTEIN YNFA"/>
    <property type="match status" value="1"/>
</dbReference>
<dbReference type="PANTHER" id="PTHR36116:SF1">
    <property type="entry name" value="UPF0060 MEMBRANE PROTEIN YNFA"/>
    <property type="match status" value="1"/>
</dbReference>
<dbReference type="Pfam" id="PF02694">
    <property type="entry name" value="UPF0060"/>
    <property type="match status" value="1"/>
</dbReference>
<dbReference type="SUPFAM" id="SSF103481">
    <property type="entry name" value="Multidrug resistance efflux transporter EmrE"/>
    <property type="match status" value="1"/>
</dbReference>
<feature type="chain" id="PRO_0000282208" description="UPF0060 membrane protein Bcen2424_1283">
    <location>
        <begin position="1"/>
        <end position="110"/>
    </location>
</feature>
<feature type="transmembrane region" description="Helical" evidence="1">
    <location>
        <begin position="9"/>
        <end position="29"/>
    </location>
</feature>
<feature type="transmembrane region" description="Helical" evidence="1">
    <location>
        <begin position="34"/>
        <end position="54"/>
    </location>
</feature>
<feature type="transmembrane region" description="Helical" evidence="1">
    <location>
        <begin position="66"/>
        <end position="86"/>
    </location>
</feature>
<feature type="transmembrane region" description="Helical" evidence="1">
    <location>
        <begin position="88"/>
        <end position="108"/>
    </location>
</feature>
<sequence length="110" mass="11587">MTELMRIAALFAATALAEIVGCYLPWLVLKAGRPAWLLVPAALSLALFAWLLTLHPSAAGRTYAAYGGVYIAVALIWLRVVDGVALTRWDVAGAVLALGGMAVIALQPRA</sequence>
<accession>A0K6A8</accession>
<comment type="subcellular location">
    <subcellularLocation>
        <location evidence="1">Cell inner membrane</location>
        <topology evidence="1">Multi-pass membrane protein</topology>
    </subcellularLocation>
</comment>
<comment type="similarity">
    <text evidence="1">Belongs to the UPF0060 family.</text>
</comment>
<comment type="sequence caution" evidence="2">
    <conflict type="erroneous initiation">
        <sequence resource="EMBL-CDS" id="ABK08035"/>
    </conflict>
</comment>
<evidence type="ECO:0000255" key="1">
    <source>
        <dbReference type="HAMAP-Rule" id="MF_00010"/>
    </source>
</evidence>
<evidence type="ECO:0000305" key="2"/>
<protein>
    <recommendedName>
        <fullName evidence="1">UPF0060 membrane protein Bcen2424_1283</fullName>
    </recommendedName>
</protein>
<proteinExistence type="inferred from homology"/>